<keyword id="KW-0997">Cell inner membrane</keyword>
<keyword id="KW-1003">Cell membrane</keyword>
<keyword id="KW-0444">Lipid biosynthesis</keyword>
<keyword id="KW-0443">Lipid metabolism</keyword>
<keyword id="KW-0472">Membrane</keyword>
<keyword id="KW-0594">Phospholipid biosynthesis</keyword>
<keyword id="KW-1208">Phospholipid metabolism</keyword>
<keyword id="KW-0808">Transferase</keyword>
<keyword id="KW-0812">Transmembrane</keyword>
<keyword id="KW-1133">Transmembrane helix</keyword>
<feature type="chain" id="PRO_1000072988" description="Glycerol-3-phosphate acyltransferase">
    <location>
        <begin position="1"/>
        <end position="202"/>
    </location>
</feature>
<feature type="transmembrane region" description="Helical" evidence="1">
    <location>
        <begin position="3"/>
        <end position="23"/>
    </location>
</feature>
<feature type="transmembrane region" description="Helical" evidence="1">
    <location>
        <begin position="61"/>
        <end position="81"/>
    </location>
</feature>
<feature type="transmembrane region" description="Helical" evidence="1">
    <location>
        <begin position="87"/>
        <end position="107"/>
    </location>
</feature>
<feature type="transmembrane region" description="Helical" evidence="1">
    <location>
        <begin position="118"/>
        <end position="138"/>
    </location>
</feature>
<feature type="transmembrane region" description="Helical" evidence="1">
    <location>
        <begin position="144"/>
        <end position="164"/>
    </location>
</feature>
<feature type="transmembrane region" description="Helical" evidence="1">
    <location>
        <begin position="167"/>
        <end position="187"/>
    </location>
</feature>
<sequence>MENLIIYAFIYLLGSIPFGLILAKFFAKTDIKKEGSKSIGATNVLRVVKEKNPKLAKKLAIATIILDFAKAAIPLLILKFLHYDQALLWSVAVLAIFGHCFSIYLLFEGGKGIATGAGAMIVLLPLEVLTAFIVWVVIGKIFKISSLASLAALLAFVISSFIFNYDLEIHTHAPVFIIAFIIVYKHLPNIKRLIFKEECKVI</sequence>
<accession>A8FKE6</accession>
<evidence type="ECO:0000255" key="1">
    <source>
        <dbReference type="HAMAP-Rule" id="MF_01043"/>
    </source>
</evidence>
<organism>
    <name type="scientific">Campylobacter jejuni subsp. jejuni serotype O:6 (strain 81116 / NCTC 11828)</name>
    <dbReference type="NCBI Taxonomy" id="407148"/>
    <lineage>
        <taxon>Bacteria</taxon>
        <taxon>Pseudomonadati</taxon>
        <taxon>Campylobacterota</taxon>
        <taxon>Epsilonproteobacteria</taxon>
        <taxon>Campylobacterales</taxon>
        <taxon>Campylobacteraceae</taxon>
        <taxon>Campylobacter</taxon>
    </lineage>
</organism>
<name>PLSY_CAMJ8</name>
<dbReference type="EC" id="2.3.1.275" evidence="1"/>
<dbReference type="EMBL" id="CP000814">
    <property type="protein sequence ID" value="ABV51933.1"/>
    <property type="molecule type" value="Genomic_DNA"/>
</dbReference>
<dbReference type="RefSeq" id="WP_002860289.1">
    <property type="nucleotide sequence ID" value="NC_009839.1"/>
</dbReference>
<dbReference type="SMR" id="A8FKE6"/>
<dbReference type="KEGG" id="cju:C8J_0334"/>
<dbReference type="HOGENOM" id="CLU_081254_2_0_7"/>
<dbReference type="UniPathway" id="UPA00085"/>
<dbReference type="GO" id="GO:0005886">
    <property type="term" value="C:plasma membrane"/>
    <property type="evidence" value="ECO:0007669"/>
    <property type="project" value="UniProtKB-SubCell"/>
</dbReference>
<dbReference type="GO" id="GO:0043772">
    <property type="term" value="F:acyl-phosphate glycerol-3-phosphate acyltransferase activity"/>
    <property type="evidence" value="ECO:0007669"/>
    <property type="project" value="UniProtKB-UniRule"/>
</dbReference>
<dbReference type="GO" id="GO:0008654">
    <property type="term" value="P:phospholipid biosynthetic process"/>
    <property type="evidence" value="ECO:0007669"/>
    <property type="project" value="UniProtKB-UniRule"/>
</dbReference>
<dbReference type="HAMAP" id="MF_01043">
    <property type="entry name" value="PlsY"/>
    <property type="match status" value="1"/>
</dbReference>
<dbReference type="InterPro" id="IPR003811">
    <property type="entry name" value="G3P_acylTferase_PlsY"/>
</dbReference>
<dbReference type="NCBIfam" id="TIGR00023">
    <property type="entry name" value="glycerol-3-phosphate 1-O-acyltransferase PlsY"/>
    <property type="match status" value="1"/>
</dbReference>
<dbReference type="PANTHER" id="PTHR30309:SF0">
    <property type="entry name" value="GLYCEROL-3-PHOSPHATE ACYLTRANSFERASE-RELATED"/>
    <property type="match status" value="1"/>
</dbReference>
<dbReference type="PANTHER" id="PTHR30309">
    <property type="entry name" value="INNER MEMBRANE PROTEIN YGIH"/>
    <property type="match status" value="1"/>
</dbReference>
<dbReference type="Pfam" id="PF02660">
    <property type="entry name" value="G3P_acyltransf"/>
    <property type="match status" value="1"/>
</dbReference>
<dbReference type="SMART" id="SM01207">
    <property type="entry name" value="G3P_acyltransf"/>
    <property type="match status" value="1"/>
</dbReference>
<reference key="1">
    <citation type="journal article" date="2007" name="J. Bacteriol.">
        <title>The complete genome sequence of Campylobacter jejuni strain 81116 (NCTC11828).</title>
        <authorList>
            <person name="Pearson B.M."/>
            <person name="Gaskin D.J.H."/>
            <person name="Segers R.P.A.M."/>
            <person name="Wells J.M."/>
            <person name="Nuijten P.J.M."/>
            <person name="van Vliet A.H.M."/>
        </authorList>
    </citation>
    <scope>NUCLEOTIDE SEQUENCE [LARGE SCALE GENOMIC DNA]</scope>
    <source>
        <strain>81116 / NCTC 11828</strain>
    </source>
</reference>
<comment type="function">
    <text evidence="1">Catalyzes the transfer of an acyl group from acyl-phosphate (acyl-PO(4)) to glycerol-3-phosphate (G3P) to form lysophosphatidic acid (LPA). This enzyme utilizes acyl-phosphate as fatty acyl donor, but not acyl-CoA or acyl-ACP.</text>
</comment>
<comment type="catalytic activity">
    <reaction evidence="1">
        <text>an acyl phosphate + sn-glycerol 3-phosphate = a 1-acyl-sn-glycero-3-phosphate + phosphate</text>
        <dbReference type="Rhea" id="RHEA:34075"/>
        <dbReference type="ChEBI" id="CHEBI:43474"/>
        <dbReference type="ChEBI" id="CHEBI:57597"/>
        <dbReference type="ChEBI" id="CHEBI:57970"/>
        <dbReference type="ChEBI" id="CHEBI:59918"/>
        <dbReference type="EC" id="2.3.1.275"/>
    </reaction>
</comment>
<comment type="pathway">
    <text evidence="1">Lipid metabolism; phospholipid metabolism.</text>
</comment>
<comment type="subunit">
    <text evidence="1">Probably interacts with PlsX.</text>
</comment>
<comment type="subcellular location">
    <subcellularLocation>
        <location evidence="1">Cell inner membrane</location>
        <topology evidence="1">Multi-pass membrane protein</topology>
    </subcellularLocation>
</comment>
<comment type="similarity">
    <text evidence="1">Belongs to the PlsY family.</text>
</comment>
<proteinExistence type="inferred from homology"/>
<gene>
    <name evidence="1" type="primary">plsY</name>
    <name type="ordered locus">C8J_0334</name>
</gene>
<protein>
    <recommendedName>
        <fullName evidence="1">Glycerol-3-phosphate acyltransferase</fullName>
    </recommendedName>
    <alternativeName>
        <fullName evidence="1">Acyl-PO4 G3P acyltransferase</fullName>
    </alternativeName>
    <alternativeName>
        <fullName evidence="1">Acyl-phosphate--glycerol-3-phosphate acyltransferase</fullName>
    </alternativeName>
    <alternativeName>
        <fullName evidence="1">G3P acyltransferase</fullName>
        <shortName evidence="1">GPAT</shortName>
        <ecNumber evidence="1">2.3.1.275</ecNumber>
    </alternativeName>
    <alternativeName>
        <fullName evidence="1">Lysophosphatidic acid synthase</fullName>
        <shortName evidence="1">LPA synthase</shortName>
    </alternativeName>
</protein>